<name>CRFA_CONVC</name>
<comment type="function">
    <text evidence="2 3 4">This peptide activates human and mouse sensory neuron-specific G-protein coupled receptors MRGPRX1 (PubMed:30243794). The activity on human receptors has been measured (EC(50)=1.8 uM) (PubMed:30243794). Compared with the agonist chloroquine (anti-malaria drug), it is 200-fold more potent (PubMed:30243794). The peptide also causes an increase in cytosolic calcium in a specific subset of DRG neurons, and, in contrast to other Conus venom peptides, the peptide also affects a large fraction of the non-neuronal cells (PubMed:25464369). In vivo, when intracranially injected into mice, it principally renders mice unable to move, and at very low doses, it causes hyperactivity (PubMed:25464369). It also induces itch sensation, since intradermal cheek injection into humanized transgenic mouse (mouse MRGPRX1 replaced by human MRGPRX1) induces scratching (PubMed:30243794). In vivo, when tested at high doses (10 uM) on zebrafish larvae, it induces a range of behavioral effects ranging from an early hypoactivity during the first hour of treatment to an increase in movement during the following hours when the larvae are submitted to strobe light phases (PubMed:33764053).</text>
</comment>
<comment type="subcellular location">
    <subcellularLocation>
        <location evidence="2">Secreted</location>
    </subcellularLocation>
</comment>
<comment type="tissue specificity">
    <text evidence="7">Expressed by the venom duct.</text>
</comment>
<comment type="miscellaneous">
    <text evidence="6">The mature peptide does not contain cysteine residue.</text>
</comment>
<comment type="similarity">
    <text evidence="6">Belongs to the FARP (FMRFamide related peptide) family.</text>
</comment>
<comment type="online information" name="Protein Spotlight">
    <link uri="https://www.proteinspotlight.org/back_issues/212/"/>
    <text>Paths of discomfort - Issue 212 of March 2019</text>
</comment>
<accession>P0DOZ7</accession>
<keyword id="KW-0027">Amidation</keyword>
<keyword id="KW-0165">Cleavage on pair of basic residues</keyword>
<keyword id="KW-0903">Direct protein sequencing</keyword>
<keyword id="KW-1213">G-protein coupled receptor impairing toxin</keyword>
<keyword id="KW-0528">Neurotoxin</keyword>
<keyword id="KW-0964">Secreted</keyword>
<keyword id="KW-0732">Signal</keyword>
<keyword id="KW-0800">Toxin</keyword>
<organism>
    <name type="scientific">Conus victoriae</name>
    <name type="common">Queen Victoria cone</name>
    <dbReference type="NCBI Taxonomy" id="319920"/>
    <lineage>
        <taxon>Eukaryota</taxon>
        <taxon>Metazoa</taxon>
        <taxon>Spiralia</taxon>
        <taxon>Lophotrochozoa</taxon>
        <taxon>Mollusca</taxon>
        <taxon>Gastropoda</taxon>
        <taxon>Caenogastropoda</taxon>
        <taxon>Neogastropoda</taxon>
        <taxon>Conoidea</taxon>
        <taxon>Conidae</taxon>
        <taxon>Conus</taxon>
        <taxon>Cylinder</taxon>
    </lineage>
</organism>
<reference key="1">
    <citation type="journal article" date="2014" name="PLoS ONE">
        <title>Diversity of conotoxin gene superfamilies in the venomous snail, Conus victoriae.</title>
        <authorList>
            <person name="Robinson S.D."/>
            <person name="Safavi-Hemami H."/>
            <person name="McIntosh L.D."/>
            <person name="Purcell A.W."/>
            <person name="Norton R.S."/>
            <person name="Papenfuss A.T."/>
        </authorList>
    </citation>
    <scope>NUCLEOTIDE SEQUENCE [MRNA]</scope>
</reference>
<reference key="2">
    <citation type="journal article" date="2015" name="J. Proteomics">
        <title>Discovery by proteogenomics and characterization of an RF-amide neuropeptide from cone snail venom.</title>
        <authorList>
            <person name="Robinson S.D."/>
            <person name="Safavi-Hemami H."/>
            <person name="Raghuraman S."/>
            <person name="Imperial J.S."/>
            <person name="Papenfuss A.T."/>
            <person name="Teichert R.W."/>
            <person name="Purcell A.W."/>
            <person name="Olivera B.M."/>
            <person name="Norton R.S."/>
        </authorList>
    </citation>
    <scope>NUCLEOTIDE SEQUENCE [MRNA]</scope>
    <scope>PROTEIN SEQUENCE OF 26-43</scope>
    <scope>IDENTIFICATION BY MASS SPECTROMETRY</scope>
    <scope>AMIDATION AT PHE-43</scope>
    <scope>SYNTHESIS OF 26-43</scope>
    <scope>SUBCELLULAR LOCATION</scope>
    <scope>FUNCTION</scope>
    <source>
        <tissue>Venom</tissue>
        <tissue>Venom duct</tissue>
    </source>
</reference>
<reference key="3">
    <citation type="journal article" date="2018" name="Toxicon">
        <title>Conopeptides promote itch through human itch receptor hMgprX1.</title>
        <authorList>
            <person name="Espino S.S."/>
            <person name="Robinson S.D."/>
            <person name="Safavi-Hemami H."/>
            <person name="Gajewiak J."/>
            <person name="Yang W."/>
            <person name="Olivera B.M."/>
            <person name="Liu Q."/>
        </authorList>
    </citation>
    <scope>FUNCTION</scope>
    <scope>SYNTHESIS OF 26-43</scope>
    <scope>BIOASSAY</scope>
    <scope>MUTAGENESIS OF 1-HIS--LEU-6 AND 1-HIS--ARG-14</scope>
</reference>
<reference key="4">
    <citation type="journal article" date="2021" name="J. Nat. Prod.">
        <title>Discovery of a potent conorfamide from Conus episcopatus using a novel zebrafish larvae assay.</title>
        <authorList>
            <person name="Bosse G.D."/>
            <person name="Urcino C."/>
            <person name="Watkins M."/>
            <person name="Florez Salcedo P."/>
            <person name="Kozel S."/>
            <person name="Chase K."/>
            <person name="Cabang A."/>
            <person name="Espino S.S."/>
            <person name="Safavi-Hemami H."/>
            <person name="Raghuraman S."/>
            <person name="Olivera B.M."/>
            <person name="Peterson R.T."/>
            <person name="Gajewiak J."/>
        </authorList>
    </citation>
    <scope>FUNCTION</scope>
    <scope>SYNTHESIS OF 26-43</scope>
</reference>
<protein>
    <recommendedName>
        <fullName evidence="6">Conorfamide-Vc1</fullName>
        <shortName evidence="5">CNF-Vc1</shortName>
    </recommendedName>
    <alternativeName>
        <fullName evidence="5">Cono-RFamide-Vc1</fullName>
    </alternativeName>
</protein>
<proteinExistence type="evidence at protein level"/>
<feature type="signal peptide" evidence="1">
    <location>
        <begin position="1"/>
        <end position="19"/>
    </location>
</feature>
<feature type="propeptide" id="PRO_0000439423" evidence="7">
    <location>
        <begin position="20"/>
        <end position="25"/>
    </location>
</feature>
<feature type="peptide" id="PRO_0000439424" description="Conorfamide-Vc1" evidence="2">
    <location>
        <begin position="26"/>
        <end position="43"/>
    </location>
</feature>
<feature type="propeptide" id="PRO_0000439425" evidence="7">
    <location>
        <begin position="45"/>
        <end position="59"/>
    </location>
</feature>
<feature type="region of interest" description="Positively charged region crucial for activity against MRGPRX1 receptors" evidence="8">
    <location>
        <begin position="32"/>
        <end position="39"/>
    </location>
</feature>
<feature type="modified residue" description="Phenylalanine amide" evidence="2">
    <location>
        <position position="43"/>
    </location>
</feature>
<feature type="mutagenesis site" description="Complete loss of activating potency on MrgprX1 receptor." evidence="3">
    <location>
        <begin position="26"/>
        <end position="39"/>
    </location>
</feature>
<feature type="mutagenesis site" description="No change in activity on MrgprX1 receptor." evidence="3">
    <location>
        <begin position="26"/>
        <end position="31"/>
    </location>
</feature>
<sequence length="59" mass="6769">MSGRGFLLLALLLLVTVEATKVEKKHSGFLLAWSGPRNRFVRFGRRDMQSPLLSERLRL</sequence>
<dbReference type="EMBL" id="GAIH01000072">
    <property type="status" value="NOT_ANNOTATED_CDS"/>
    <property type="molecule type" value="mRNA"/>
</dbReference>
<dbReference type="GO" id="GO:0005576">
    <property type="term" value="C:extracellular region"/>
    <property type="evidence" value="ECO:0007669"/>
    <property type="project" value="UniProtKB-SubCell"/>
</dbReference>
<dbReference type="GO" id="GO:0090729">
    <property type="term" value="F:toxin activity"/>
    <property type="evidence" value="ECO:0007669"/>
    <property type="project" value="UniProtKB-KW"/>
</dbReference>
<evidence type="ECO:0000255" key="1"/>
<evidence type="ECO:0000269" key="2">
    <source>
    </source>
</evidence>
<evidence type="ECO:0000269" key="3">
    <source>
    </source>
</evidence>
<evidence type="ECO:0000269" key="4">
    <source>
    </source>
</evidence>
<evidence type="ECO:0000303" key="5">
    <source>
    </source>
</evidence>
<evidence type="ECO:0000305" key="6"/>
<evidence type="ECO:0000305" key="7">
    <source>
    </source>
</evidence>
<evidence type="ECO:0000305" key="8">
    <source>
    </source>
</evidence>